<accession>Q63T15</accession>
<comment type="function">
    <text evidence="1">Responsible for the release of ribosomes from messenger RNA at the termination of protein biosynthesis. May increase the efficiency of translation by recycling ribosomes from one round of translation to another.</text>
</comment>
<comment type="subcellular location">
    <subcellularLocation>
        <location evidence="1">Cytoplasm</location>
    </subcellularLocation>
</comment>
<comment type="similarity">
    <text evidence="1">Belongs to the RRF family.</text>
</comment>
<dbReference type="EMBL" id="BX571965">
    <property type="protein sequence ID" value="CAH36158.1"/>
    <property type="molecule type" value="Genomic_DNA"/>
</dbReference>
<dbReference type="RefSeq" id="WP_004192143.1">
    <property type="nucleotide sequence ID" value="NZ_CP009538.1"/>
</dbReference>
<dbReference type="RefSeq" id="YP_108751.1">
    <property type="nucleotide sequence ID" value="NC_006350.1"/>
</dbReference>
<dbReference type="SMR" id="Q63T15"/>
<dbReference type="STRING" id="272560.BPSL2156"/>
<dbReference type="GeneID" id="93060697"/>
<dbReference type="KEGG" id="bps:BPSL2156"/>
<dbReference type="PATRIC" id="fig|272560.51.peg.3296"/>
<dbReference type="eggNOG" id="COG0233">
    <property type="taxonomic scope" value="Bacteria"/>
</dbReference>
<dbReference type="Proteomes" id="UP000000605">
    <property type="component" value="Chromosome 1"/>
</dbReference>
<dbReference type="GO" id="GO:0005829">
    <property type="term" value="C:cytosol"/>
    <property type="evidence" value="ECO:0007669"/>
    <property type="project" value="GOC"/>
</dbReference>
<dbReference type="GO" id="GO:0043023">
    <property type="term" value="F:ribosomal large subunit binding"/>
    <property type="evidence" value="ECO:0007669"/>
    <property type="project" value="TreeGrafter"/>
</dbReference>
<dbReference type="GO" id="GO:0002184">
    <property type="term" value="P:cytoplasmic translational termination"/>
    <property type="evidence" value="ECO:0007669"/>
    <property type="project" value="TreeGrafter"/>
</dbReference>
<dbReference type="CDD" id="cd00520">
    <property type="entry name" value="RRF"/>
    <property type="match status" value="1"/>
</dbReference>
<dbReference type="FunFam" id="1.10.132.20:FF:000001">
    <property type="entry name" value="Ribosome-recycling factor"/>
    <property type="match status" value="1"/>
</dbReference>
<dbReference type="FunFam" id="3.30.1360.40:FF:000001">
    <property type="entry name" value="Ribosome-recycling factor"/>
    <property type="match status" value="1"/>
</dbReference>
<dbReference type="Gene3D" id="3.30.1360.40">
    <property type="match status" value="1"/>
</dbReference>
<dbReference type="Gene3D" id="1.10.132.20">
    <property type="entry name" value="Ribosome-recycling factor"/>
    <property type="match status" value="1"/>
</dbReference>
<dbReference type="HAMAP" id="MF_00040">
    <property type="entry name" value="RRF"/>
    <property type="match status" value="1"/>
</dbReference>
<dbReference type="InterPro" id="IPR002661">
    <property type="entry name" value="Ribosome_recyc_fac"/>
</dbReference>
<dbReference type="InterPro" id="IPR023584">
    <property type="entry name" value="Ribosome_recyc_fac_dom"/>
</dbReference>
<dbReference type="InterPro" id="IPR036191">
    <property type="entry name" value="RRF_sf"/>
</dbReference>
<dbReference type="NCBIfam" id="TIGR00496">
    <property type="entry name" value="frr"/>
    <property type="match status" value="1"/>
</dbReference>
<dbReference type="PANTHER" id="PTHR20982:SF3">
    <property type="entry name" value="MITOCHONDRIAL RIBOSOME RECYCLING FACTOR PSEUDO 1"/>
    <property type="match status" value="1"/>
</dbReference>
<dbReference type="PANTHER" id="PTHR20982">
    <property type="entry name" value="RIBOSOME RECYCLING FACTOR"/>
    <property type="match status" value="1"/>
</dbReference>
<dbReference type="Pfam" id="PF01765">
    <property type="entry name" value="RRF"/>
    <property type="match status" value="1"/>
</dbReference>
<dbReference type="SUPFAM" id="SSF55194">
    <property type="entry name" value="Ribosome recycling factor, RRF"/>
    <property type="match status" value="1"/>
</dbReference>
<sequence length="186" mass="20899">MSVADIKKSVEQKMQRSIEAFKNDLAKIRTGRAHTGLLDHVQVDYYGSMVPISQVANLTLVDARTIGVQPWEKTMVAKVEKAIREADLGLNPATSGDLIRVPMPPLTEERRRELTKVVKSEGETAKVAVRNLRRDANEQLKKLVKDKEISEDDERRASDDVQKLTDKHVAEIDKLVQAKDAEIMTV</sequence>
<keyword id="KW-0963">Cytoplasm</keyword>
<keyword id="KW-0648">Protein biosynthesis</keyword>
<keyword id="KW-1185">Reference proteome</keyword>
<evidence type="ECO:0000255" key="1">
    <source>
        <dbReference type="HAMAP-Rule" id="MF_00040"/>
    </source>
</evidence>
<organism>
    <name type="scientific">Burkholderia pseudomallei (strain K96243)</name>
    <dbReference type="NCBI Taxonomy" id="272560"/>
    <lineage>
        <taxon>Bacteria</taxon>
        <taxon>Pseudomonadati</taxon>
        <taxon>Pseudomonadota</taxon>
        <taxon>Betaproteobacteria</taxon>
        <taxon>Burkholderiales</taxon>
        <taxon>Burkholderiaceae</taxon>
        <taxon>Burkholderia</taxon>
        <taxon>pseudomallei group</taxon>
    </lineage>
</organism>
<feature type="chain" id="PRO_0000167432" description="Ribosome-recycling factor">
    <location>
        <begin position="1"/>
        <end position="186"/>
    </location>
</feature>
<protein>
    <recommendedName>
        <fullName evidence="1">Ribosome-recycling factor</fullName>
        <shortName evidence="1">RRF</shortName>
    </recommendedName>
    <alternativeName>
        <fullName evidence="1">Ribosome-releasing factor</fullName>
    </alternativeName>
</protein>
<name>RRF_BURPS</name>
<proteinExistence type="inferred from homology"/>
<reference key="1">
    <citation type="journal article" date="2004" name="Proc. Natl. Acad. Sci. U.S.A.">
        <title>Genomic plasticity of the causative agent of melioidosis, Burkholderia pseudomallei.</title>
        <authorList>
            <person name="Holden M.T.G."/>
            <person name="Titball R.W."/>
            <person name="Peacock S.J."/>
            <person name="Cerdeno-Tarraga A.-M."/>
            <person name="Atkins T."/>
            <person name="Crossman L.C."/>
            <person name="Pitt T."/>
            <person name="Churcher C."/>
            <person name="Mungall K.L."/>
            <person name="Bentley S.D."/>
            <person name="Sebaihia M."/>
            <person name="Thomson N.R."/>
            <person name="Bason N."/>
            <person name="Beacham I.R."/>
            <person name="Brooks K."/>
            <person name="Brown K.A."/>
            <person name="Brown N.F."/>
            <person name="Challis G.L."/>
            <person name="Cherevach I."/>
            <person name="Chillingworth T."/>
            <person name="Cronin A."/>
            <person name="Crossett B."/>
            <person name="Davis P."/>
            <person name="DeShazer D."/>
            <person name="Feltwell T."/>
            <person name="Fraser A."/>
            <person name="Hance Z."/>
            <person name="Hauser H."/>
            <person name="Holroyd S."/>
            <person name="Jagels K."/>
            <person name="Keith K.E."/>
            <person name="Maddison M."/>
            <person name="Moule S."/>
            <person name="Price C."/>
            <person name="Quail M.A."/>
            <person name="Rabbinowitsch E."/>
            <person name="Rutherford K."/>
            <person name="Sanders M."/>
            <person name="Simmonds M."/>
            <person name="Songsivilai S."/>
            <person name="Stevens K."/>
            <person name="Tumapa S."/>
            <person name="Vesaratchavest M."/>
            <person name="Whitehead S."/>
            <person name="Yeats C."/>
            <person name="Barrell B.G."/>
            <person name="Oyston P.C.F."/>
            <person name="Parkhill J."/>
        </authorList>
    </citation>
    <scope>NUCLEOTIDE SEQUENCE [LARGE SCALE GENOMIC DNA]</scope>
    <source>
        <strain>K96243</strain>
    </source>
</reference>
<gene>
    <name evidence="1" type="primary">frr</name>
    <name type="synonym">rrf</name>
    <name type="ordered locus">BPSL2156</name>
</gene>